<reference key="1">
    <citation type="journal article" date="2003" name="J. Bacteriol.">
        <title>Complete genome sequence of the oral pathogenic bacterium Porphyromonas gingivalis strain W83.</title>
        <authorList>
            <person name="Nelson K.E."/>
            <person name="Fleischmann R.D."/>
            <person name="DeBoy R.T."/>
            <person name="Paulsen I.T."/>
            <person name="Fouts D.E."/>
            <person name="Eisen J.A."/>
            <person name="Daugherty S.C."/>
            <person name="Dodson R.J."/>
            <person name="Durkin A.S."/>
            <person name="Gwinn M.L."/>
            <person name="Haft D.H."/>
            <person name="Kolonay J.F."/>
            <person name="Nelson W.C."/>
            <person name="Mason T.M."/>
            <person name="Tallon L."/>
            <person name="Gray J."/>
            <person name="Granger D."/>
            <person name="Tettelin H."/>
            <person name="Dong H."/>
            <person name="Galvin J.L."/>
            <person name="Duncan M.J."/>
            <person name="Dewhirst F.E."/>
            <person name="Fraser C.M."/>
        </authorList>
    </citation>
    <scope>NUCLEOTIDE SEQUENCE [LARGE SCALE GENOMIC DNA]</scope>
    <source>
        <strain>ATCC BAA-308 / W83</strain>
    </source>
</reference>
<feature type="chain" id="PRO_0000238017" description="Large-conductance mechanosensitive channel">
    <location>
        <begin position="1"/>
        <end position="139"/>
    </location>
</feature>
<feature type="transmembrane region" description="Helical" evidence="1">
    <location>
        <begin position="17"/>
        <end position="37"/>
    </location>
</feature>
<feature type="transmembrane region" description="Helical" evidence="1">
    <location>
        <begin position="88"/>
        <end position="108"/>
    </location>
</feature>
<accession>Q7MUZ1</accession>
<sequence length="139" mass="15135">MKKFIQDFKAFALKGNVVDMAVGVIIGGAFGKIVTSLVNDIMMPPISLLTGGVNFTDLKLVLSKAVVEGGEVVKPEVSWNYGNFIQTTVDFLILAFVIFLMIKAIMAAKRKEEEAPAAPAPTPPEIELLTEIRDLLKKQ</sequence>
<keyword id="KW-0997">Cell inner membrane</keyword>
<keyword id="KW-1003">Cell membrane</keyword>
<keyword id="KW-0407">Ion channel</keyword>
<keyword id="KW-0406">Ion transport</keyword>
<keyword id="KW-0472">Membrane</keyword>
<keyword id="KW-1185">Reference proteome</keyword>
<keyword id="KW-0812">Transmembrane</keyword>
<keyword id="KW-1133">Transmembrane helix</keyword>
<keyword id="KW-0813">Transport</keyword>
<evidence type="ECO:0000255" key="1">
    <source>
        <dbReference type="HAMAP-Rule" id="MF_00115"/>
    </source>
</evidence>
<dbReference type="EMBL" id="AE015924">
    <property type="protein sequence ID" value="AAQ66399.1"/>
    <property type="molecule type" value="Genomic_DNA"/>
</dbReference>
<dbReference type="RefSeq" id="WP_004585532.1">
    <property type="nucleotide sequence ID" value="NC_002950.2"/>
</dbReference>
<dbReference type="SMR" id="Q7MUZ1"/>
<dbReference type="STRING" id="242619.PG_1330"/>
<dbReference type="EnsemblBacteria" id="AAQ66399">
    <property type="protein sequence ID" value="AAQ66399"/>
    <property type="gene ID" value="PG_1330"/>
</dbReference>
<dbReference type="GeneID" id="29256325"/>
<dbReference type="KEGG" id="pgi:PG_1330"/>
<dbReference type="eggNOG" id="COG1970">
    <property type="taxonomic scope" value="Bacteria"/>
</dbReference>
<dbReference type="HOGENOM" id="CLU_095787_0_0_10"/>
<dbReference type="Proteomes" id="UP000000588">
    <property type="component" value="Chromosome"/>
</dbReference>
<dbReference type="GO" id="GO:0005886">
    <property type="term" value="C:plasma membrane"/>
    <property type="evidence" value="ECO:0007669"/>
    <property type="project" value="UniProtKB-SubCell"/>
</dbReference>
<dbReference type="GO" id="GO:0008381">
    <property type="term" value="F:mechanosensitive monoatomic ion channel activity"/>
    <property type="evidence" value="ECO:0007669"/>
    <property type="project" value="UniProtKB-UniRule"/>
</dbReference>
<dbReference type="FunFam" id="1.10.1200.120:FF:000001">
    <property type="entry name" value="Large-conductance mechanosensitive channel"/>
    <property type="match status" value="1"/>
</dbReference>
<dbReference type="Gene3D" id="1.10.1200.120">
    <property type="entry name" value="Large-conductance mechanosensitive channel, MscL, domain 1"/>
    <property type="match status" value="1"/>
</dbReference>
<dbReference type="HAMAP" id="MF_00115">
    <property type="entry name" value="MscL"/>
    <property type="match status" value="1"/>
</dbReference>
<dbReference type="InterPro" id="IPR019823">
    <property type="entry name" value="Mechanosensitive_channel_CS"/>
</dbReference>
<dbReference type="InterPro" id="IPR001185">
    <property type="entry name" value="MS_channel"/>
</dbReference>
<dbReference type="InterPro" id="IPR037673">
    <property type="entry name" value="MSC/AndL"/>
</dbReference>
<dbReference type="InterPro" id="IPR036019">
    <property type="entry name" value="MscL_channel"/>
</dbReference>
<dbReference type="NCBIfam" id="TIGR00220">
    <property type="entry name" value="mscL"/>
    <property type="match status" value="1"/>
</dbReference>
<dbReference type="NCBIfam" id="NF001843">
    <property type="entry name" value="PRK00567.1-4"/>
    <property type="match status" value="1"/>
</dbReference>
<dbReference type="NCBIfam" id="NF010557">
    <property type="entry name" value="PRK13952.1"/>
    <property type="match status" value="1"/>
</dbReference>
<dbReference type="PANTHER" id="PTHR30266:SF2">
    <property type="entry name" value="LARGE-CONDUCTANCE MECHANOSENSITIVE CHANNEL"/>
    <property type="match status" value="1"/>
</dbReference>
<dbReference type="PANTHER" id="PTHR30266">
    <property type="entry name" value="MECHANOSENSITIVE CHANNEL MSCL"/>
    <property type="match status" value="1"/>
</dbReference>
<dbReference type="Pfam" id="PF01741">
    <property type="entry name" value="MscL"/>
    <property type="match status" value="1"/>
</dbReference>
<dbReference type="PRINTS" id="PR01264">
    <property type="entry name" value="MECHCHANNEL"/>
</dbReference>
<dbReference type="SUPFAM" id="SSF81330">
    <property type="entry name" value="Gated mechanosensitive channel"/>
    <property type="match status" value="1"/>
</dbReference>
<dbReference type="PROSITE" id="PS01327">
    <property type="entry name" value="MSCL"/>
    <property type="match status" value="1"/>
</dbReference>
<protein>
    <recommendedName>
        <fullName evidence="1">Large-conductance mechanosensitive channel</fullName>
    </recommendedName>
</protein>
<comment type="function">
    <text evidence="1">Channel that opens in response to stretch forces in the membrane lipid bilayer. May participate in the regulation of osmotic pressure changes within the cell.</text>
</comment>
<comment type="subunit">
    <text evidence="1">Homopentamer.</text>
</comment>
<comment type="subcellular location">
    <subcellularLocation>
        <location evidence="1">Cell inner membrane</location>
        <topology evidence="1">Multi-pass membrane protein</topology>
    </subcellularLocation>
</comment>
<comment type="similarity">
    <text evidence="1">Belongs to the MscL family.</text>
</comment>
<organism>
    <name type="scientific">Porphyromonas gingivalis (strain ATCC BAA-308 / W83)</name>
    <dbReference type="NCBI Taxonomy" id="242619"/>
    <lineage>
        <taxon>Bacteria</taxon>
        <taxon>Pseudomonadati</taxon>
        <taxon>Bacteroidota</taxon>
        <taxon>Bacteroidia</taxon>
        <taxon>Bacteroidales</taxon>
        <taxon>Porphyromonadaceae</taxon>
        <taxon>Porphyromonas</taxon>
    </lineage>
</organism>
<gene>
    <name evidence="1" type="primary">mscL</name>
    <name type="ordered locus">PG_1330</name>
</gene>
<name>MSCL_PORGI</name>
<proteinExistence type="inferred from homology"/>